<protein>
    <recommendedName>
        <fullName evidence="1">Small ribosomal subunit protein bS16</fullName>
    </recommendedName>
    <alternativeName>
        <fullName evidence="2">30S ribosomal protein S16</fullName>
    </alternativeName>
</protein>
<accession>C5BR73</accession>
<keyword id="KW-1185">Reference proteome</keyword>
<keyword id="KW-0687">Ribonucleoprotein</keyword>
<keyword id="KW-0689">Ribosomal protein</keyword>
<evidence type="ECO:0000255" key="1">
    <source>
        <dbReference type="HAMAP-Rule" id="MF_00385"/>
    </source>
</evidence>
<evidence type="ECO:0000305" key="2"/>
<name>RS16_TERTT</name>
<sequence>MVSIRLSRGGSKKRPFYHLTVTDSRSARDGAFIERLGFFNPIARGQEERLRVDNERLEYWKGQGAQMSDRVAKLIKDAAAA</sequence>
<organism>
    <name type="scientific">Teredinibacter turnerae (strain ATCC 39867 / T7901)</name>
    <dbReference type="NCBI Taxonomy" id="377629"/>
    <lineage>
        <taxon>Bacteria</taxon>
        <taxon>Pseudomonadati</taxon>
        <taxon>Pseudomonadota</taxon>
        <taxon>Gammaproteobacteria</taxon>
        <taxon>Cellvibrionales</taxon>
        <taxon>Cellvibrionaceae</taxon>
        <taxon>Teredinibacter</taxon>
    </lineage>
</organism>
<dbReference type="EMBL" id="CP001614">
    <property type="protein sequence ID" value="ACR12959.1"/>
    <property type="molecule type" value="Genomic_DNA"/>
</dbReference>
<dbReference type="RefSeq" id="WP_015819072.1">
    <property type="nucleotide sequence ID" value="NC_012997.1"/>
</dbReference>
<dbReference type="SMR" id="C5BR73"/>
<dbReference type="STRING" id="377629.TERTU_1159"/>
<dbReference type="GeneID" id="58408915"/>
<dbReference type="GeneID" id="93857507"/>
<dbReference type="KEGG" id="ttu:TERTU_1159"/>
<dbReference type="eggNOG" id="COG0228">
    <property type="taxonomic scope" value="Bacteria"/>
</dbReference>
<dbReference type="HOGENOM" id="CLU_100590_5_1_6"/>
<dbReference type="OrthoDB" id="9807878at2"/>
<dbReference type="Proteomes" id="UP000009080">
    <property type="component" value="Chromosome"/>
</dbReference>
<dbReference type="GO" id="GO:0005737">
    <property type="term" value="C:cytoplasm"/>
    <property type="evidence" value="ECO:0007669"/>
    <property type="project" value="UniProtKB-ARBA"/>
</dbReference>
<dbReference type="GO" id="GO:0015935">
    <property type="term" value="C:small ribosomal subunit"/>
    <property type="evidence" value="ECO:0007669"/>
    <property type="project" value="TreeGrafter"/>
</dbReference>
<dbReference type="GO" id="GO:0003735">
    <property type="term" value="F:structural constituent of ribosome"/>
    <property type="evidence" value="ECO:0007669"/>
    <property type="project" value="InterPro"/>
</dbReference>
<dbReference type="GO" id="GO:0006412">
    <property type="term" value="P:translation"/>
    <property type="evidence" value="ECO:0007669"/>
    <property type="project" value="UniProtKB-UniRule"/>
</dbReference>
<dbReference type="FunFam" id="3.30.1320.10:FF:000001">
    <property type="entry name" value="30S ribosomal protein S16"/>
    <property type="match status" value="1"/>
</dbReference>
<dbReference type="Gene3D" id="3.30.1320.10">
    <property type="match status" value="1"/>
</dbReference>
<dbReference type="HAMAP" id="MF_00385">
    <property type="entry name" value="Ribosomal_bS16"/>
    <property type="match status" value="1"/>
</dbReference>
<dbReference type="InterPro" id="IPR000307">
    <property type="entry name" value="Ribosomal_bS16"/>
</dbReference>
<dbReference type="InterPro" id="IPR023803">
    <property type="entry name" value="Ribosomal_bS16_dom_sf"/>
</dbReference>
<dbReference type="NCBIfam" id="TIGR00002">
    <property type="entry name" value="S16"/>
    <property type="match status" value="1"/>
</dbReference>
<dbReference type="PANTHER" id="PTHR12919">
    <property type="entry name" value="30S RIBOSOMAL PROTEIN S16"/>
    <property type="match status" value="1"/>
</dbReference>
<dbReference type="PANTHER" id="PTHR12919:SF20">
    <property type="entry name" value="SMALL RIBOSOMAL SUBUNIT PROTEIN BS16M"/>
    <property type="match status" value="1"/>
</dbReference>
<dbReference type="Pfam" id="PF00886">
    <property type="entry name" value="Ribosomal_S16"/>
    <property type="match status" value="1"/>
</dbReference>
<dbReference type="SUPFAM" id="SSF54565">
    <property type="entry name" value="Ribosomal protein S16"/>
    <property type="match status" value="1"/>
</dbReference>
<comment type="similarity">
    <text evidence="1">Belongs to the bacterial ribosomal protein bS16 family.</text>
</comment>
<reference key="1">
    <citation type="journal article" date="2009" name="PLoS ONE">
        <title>The complete genome of Teredinibacter turnerae T7901: an intracellular endosymbiont of marine wood-boring bivalves (shipworms).</title>
        <authorList>
            <person name="Yang J.C."/>
            <person name="Madupu R."/>
            <person name="Durkin A.S."/>
            <person name="Ekborg N.A."/>
            <person name="Pedamallu C.S."/>
            <person name="Hostetler J.B."/>
            <person name="Radune D."/>
            <person name="Toms B.S."/>
            <person name="Henrissat B."/>
            <person name="Coutinho P.M."/>
            <person name="Schwarz S."/>
            <person name="Field L."/>
            <person name="Trindade-Silva A.E."/>
            <person name="Soares C.A.G."/>
            <person name="Elshahawi S."/>
            <person name="Hanora A."/>
            <person name="Schmidt E.W."/>
            <person name="Haygood M.G."/>
            <person name="Posfai J."/>
            <person name="Benner J."/>
            <person name="Madinger C."/>
            <person name="Nove J."/>
            <person name="Anton B."/>
            <person name="Chaudhary K."/>
            <person name="Foster J."/>
            <person name="Holman A."/>
            <person name="Kumar S."/>
            <person name="Lessard P.A."/>
            <person name="Luyten Y.A."/>
            <person name="Slatko B."/>
            <person name="Wood N."/>
            <person name="Wu B."/>
            <person name="Teplitski M."/>
            <person name="Mougous J.D."/>
            <person name="Ward N."/>
            <person name="Eisen J.A."/>
            <person name="Badger J.H."/>
            <person name="Distel D.L."/>
        </authorList>
    </citation>
    <scope>NUCLEOTIDE SEQUENCE [LARGE SCALE GENOMIC DNA]</scope>
    <source>
        <strain>ATCC 39867 / T7901</strain>
    </source>
</reference>
<feature type="chain" id="PRO_1000205774" description="Small ribosomal subunit protein bS16">
    <location>
        <begin position="1"/>
        <end position="81"/>
    </location>
</feature>
<proteinExistence type="inferred from homology"/>
<gene>
    <name evidence="1" type="primary">rpsP</name>
    <name type="ordered locus">TERTU_1159</name>
</gene>